<evidence type="ECO:0000250" key="1"/>
<evidence type="ECO:0000250" key="2">
    <source>
        <dbReference type="UniProtKB" id="Q02930"/>
    </source>
</evidence>
<evidence type="ECO:0000255" key="3">
    <source>
        <dbReference type="PROSITE-ProRule" id="PRU00978"/>
    </source>
</evidence>
<evidence type="ECO:0000255" key="4">
    <source>
        <dbReference type="RuleBase" id="RU000470"/>
    </source>
</evidence>
<evidence type="ECO:0000256" key="5">
    <source>
        <dbReference type="SAM" id="MobiDB-lite"/>
    </source>
</evidence>
<evidence type="ECO:0000269" key="6">
    <source>
    </source>
</evidence>
<evidence type="ECO:0000303" key="7">
    <source>
    </source>
</evidence>
<evidence type="ECO:0000305" key="8"/>
<evidence type="ECO:0000312" key="9">
    <source>
        <dbReference type="EMBL" id="AAH29022.1"/>
    </source>
</evidence>
<keyword id="KW-0010">Activator</keyword>
<keyword id="KW-0025">Alternative splicing</keyword>
<keyword id="KW-0238">DNA-binding</keyword>
<keyword id="KW-0539">Nucleus</keyword>
<keyword id="KW-1185">Reference proteome</keyword>
<keyword id="KW-0804">Transcription</keyword>
<keyword id="KW-0805">Transcription regulation</keyword>
<gene>
    <name type="primary">Creb5</name>
</gene>
<name>CREB5_MOUSE</name>
<accession>Q8K1L0</accession>
<accession>Q3TCE1</accession>
<accession>Q3U228</accession>
<accession>Q8BWH8</accession>
<proteinExistence type="evidence at transcript level"/>
<dbReference type="EMBL" id="AK052451">
    <property type="protein sequence ID" value="BAC34998.1"/>
    <property type="molecule type" value="mRNA"/>
</dbReference>
<dbReference type="EMBL" id="AK154148">
    <property type="protein sequence ID" value="BAE32408.1"/>
    <property type="molecule type" value="mRNA"/>
</dbReference>
<dbReference type="EMBL" id="AK155537">
    <property type="protein sequence ID" value="BAE33314.1"/>
    <property type="molecule type" value="mRNA"/>
</dbReference>
<dbReference type="EMBL" id="AK170766">
    <property type="protein sequence ID" value="BAE42016.1"/>
    <property type="molecule type" value="mRNA"/>
</dbReference>
<dbReference type="EMBL" id="BC029022">
    <property type="protein sequence ID" value="AAH29022.1"/>
    <property type="status" value="ALT_INIT"/>
    <property type="molecule type" value="mRNA"/>
</dbReference>
<dbReference type="CCDS" id="CCDS20153.1">
    <molecule id="Q8K1L0-1"/>
</dbReference>
<dbReference type="RefSeq" id="NP_001314750.1">
    <property type="nucleotide sequence ID" value="NM_001327821.1"/>
</dbReference>
<dbReference type="RefSeq" id="NP_766316.1">
    <property type="nucleotide sequence ID" value="NM_172728.2"/>
</dbReference>
<dbReference type="SMR" id="Q8K1L0"/>
<dbReference type="BioGRID" id="231205">
    <property type="interactions" value="2"/>
</dbReference>
<dbReference type="FunCoup" id="Q8K1L0">
    <property type="interactions" value="1891"/>
</dbReference>
<dbReference type="STRING" id="10090.ENSMUSP00000144979"/>
<dbReference type="GlyGen" id="Q8K1L0">
    <property type="glycosylation" value="1 site"/>
</dbReference>
<dbReference type="PhosphoSitePlus" id="Q8K1L0"/>
<dbReference type="PaxDb" id="10090-ENSMUSP00000038532"/>
<dbReference type="PeptideAtlas" id="Q8K1L0"/>
<dbReference type="ProteomicsDB" id="277892">
    <molecule id="Q8K1L0-1"/>
</dbReference>
<dbReference type="ProteomicsDB" id="277893">
    <molecule id="Q8K1L0-2"/>
</dbReference>
<dbReference type="DNASU" id="231991"/>
<dbReference type="GeneID" id="231991"/>
<dbReference type="KEGG" id="mmu:231991"/>
<dbReference type="UCSC" id="uc009bzf.2">
    <molecule id="Q8K1L0-2"/>
    <property type="organism name" value="mouse"/>
</dbReference>
<dbReference type="UCSC" id="uc009bzi.1">
    <molecule id="Q8K1L0-1"/>
    <property type="organism name" value="mouse"/>
</dbReference>
<dbReference type="AGR" id="MGI:2443973"/>
<dbReference type="CTD" id="9586"/>
<dbReference type="MGI" id="MGI:2443973">
    <property type="gene designation" value="Creb5"/>
</dbReference>
<dbReference type="eggNOG" id="KOG1414">
    <property type="taxonomic scope" value="Eukaryota"/>
</dbReference>
<dbReference type="InParanoid" id="Q8K1L0"/>
<dbReference type="OrthoDB" id="295274at2759"/>
<dbReference type="PhylomeDB" id="Q8K1L0"/>
<dbReference type="BioGRID-ORCS" id="231991">
    <property type="hits" value="6 hits in 44 CRISPR screens"/>
</dbReference>
<dbReference type="ChiTaRS" id="Creb5">
    <property type="organism name" value="mouse"/>
</dbReference>
<dbReference type="PRO" id="PR:Q8K1L0"/>
<dbReference type="Proteomes" id="UP000000589">
    <property type="component" value="Unplaced"/>
</dbReference>
<dbReference type="RNAct" id="Q8K1L0">
    <property type="molecule type" value="protein"/>
</dbReference>
<dbReference type="GO" id="GO:0005634">
    <property type="term" value="C:nucleus"/>
    <property type="evidence" value="ECO:0000314"/>
    <property type="project" value="MGI"/>
</dbReference>
<dbReference type="GO" id="GO:0003677">
    <property type="term" value="F:DNA binding"/>
    <property type="evidence" value="ECO:0007669"/>
    <property type="project" value="UniProtKB-KW"/>
</dbReference>
<dbReference type="GO" id="GO:0001228">
    <property type="term" value="F:DNA-binding transcription activator activity, RNA polymerase II-specific"/>
    <property type="evidence" value="ECO:0000314"/>
    <property type="project" value="MGI"/>
</dbReference>
<dbReference type="GO" id="GO:0003700">
    <property type="term" value="F:DNA-binding transcription factor activity"/>
    <property type="evidence" value="ECO:0000250"/>
    <property type="project" value="UniProtKB"/>
</dbReference>
<dbReference type="GO" id="GO:0060612">
    <property type="term" value="P:adipose tissue development"/>
    <property type="evidence" value="ECO:0000316"/>
    <property type="project" value="MGI"/>
</dbReference>
<dbReference type="GO" id="GO:0045444">
    <property type="term" value="P:fat cell differentiation"/>
    <property type="evidence" value="ECO:0000316"/>
    <property type="project" value="MGI"/>
</dbReference>
<dbReference type="GO" id="GO:0045893">
    <property type="term" value="P:positive regulation of DNA-templated transcription"/>
    <property type="evidence" value="ECO:0000250"/>
    <property type="project" value="UniProtKB"/>
</dbReference>
<dbReference type="GO" id="GO:0045944">
    <property type="term" value="P:positive regulation of transcription by RNA polymerase II"/>
    <property type="evidence" value="ECO:0000316"/>
    <property type="project" value="MGI"/>
</dbReference>
<dbReference type="GO" id="GO:0050872">
    <property type="term" value="P:white fat cell differentiation"/>
    <property type="evidence" value="ECO:0000315"/>
    <property type="project" value="MGI"/>
</dbReference>
<dbReference type="CDD" id="cd14687">
    <property type="entry name" value="bZIP_ATF2"/>
    <property type="match status" value="1"/>
</dbReference>
<dbReference type="FunFam" id="1.20.5.170:FF:000010">
    <property type="entry name" value="Cyclic AMP-dependent transcription factor ATF-2"/>
    <property type="match status" value="1"/>
</dbReference>
<dbReference type="Gene3D" id="1.20.5.170">
    <property type="match status" value="1"/>
</dbReference>
<dbReference type="InterPro" id="IPR004827">
    <property type="entry name" value="bZIP"/>
</dbReference>
<dbReference type="InterPro" id="IPR046347">
    <property type="entry name" value="bZIP_sf"/>
</dbReference>
<dbReference type="InterPro" id="IPR051027">
    <property type="entry name" value="bZIP_transcription_factors"/>
</dbReference>
<dbReference type="InterPro" id="IPR016378">
    <property type="entry name" value="TF_CRE-BP1-typ"/>
</dbReference>
<dbReference type="PANTHER" id="PTHR19304">
    <property type="entry name" value="CYCLIC-AMP RESPONSE ELEMENT BINDING PROTEIN"/>
    <property type="match status" value="1"/>
</dbReference>
<dbReference type="Pfam" id="PF00170">
    <property type="entry name" value="bZIP_1"/>
    <property type="match status" value="1"/>
</dbReference>
<dbReference type="PIRSF" id="PIRSF003153">
    <property type="entry name" value="ATF2_CRE-BP1"/>
    <property type="match status" value="1"/>
</dbReference>
<dbReference type="SMART" id="SM00338">
    <property type="entry name" value="BRLZ"/>
    <property type="match status" value="1"/>
</dbReference>
<dbReference type="SUPFAM" id="SSF57959">
    <property type="entry name" value="Leucine zipper domain"/>
    <property type="match status" value="1"/>
</dbReference>
<dbReference type="PROSITE" id="PS50217">
    <property type="entry name" value="BZIP"/>
    <property type="match status" value="1"/>
</dbReference>
<dbReference type="PROSITE" id="PS00036">
    <property type="entry name" value="BZIP_BASIC"/>
    <property type="match status" value="1"/>
</dbReference>
<feature type="chain" id="PRO_0000076605" description="Cyclic AMP-responsive element-binding protein 5">
    <location>
        <begin position="1"/>
        <end position="357"/>
    </location>
</feature>
<feature type="domain" description="bZIP" evidence="3">
    <location>
        <begin position="224"/>
        <end position="287"/>
    </location>
</feature>
<feature type="region of interest" description="Disordered" evidence="5">
    <location>
        <begin position="114"/>
        <end position="239"/>
    </location>
</feature>
<feature type="region of interest" description="Basic motif" evidence="3">
    <location>
        <begin position="226"/>
        <end position="246"/>
    </location>
</feature>
<feature type="region of interest" description="Leucine-zipper" evidence="3">
    <location>
        <begin position="252"/>
        <end position="280"/>
    </location>
</feature>
<feature type="region of interest" description="Disordered" evidence="5">
    <location>
        <begin position="298"/>
        <end position="318"/>
    </location>
</feature>
<feature type="compositionally biased region" description="Basic residues" evidence="5">
    <location>
        <begin position="120"/>
        <end position="129"/>
    </location>
</feature>
<feature type="compositionally biased region" description="Basic residues" evidence="5">
    <location>
        <begin position="138"/>
        <end position="175"/>
    </location>
</feature>
<feature type="compositionally biased region" description="Polar residues" evidence="5">
    <location>
        <begin position="186"/>
        <end position="195"/>
    </location>
</feature>
<feature type="compositionally biased region" description="Low complexity" evidence="5">
    <location>
        <begin position="196"/>
        <end position="206"/>
    </location>
</feature>
<feature type="compositionally biased region" description="Basic and acidic residues" evidence="5">
    <location>
        <begin position="218"/>
        <end position="235"/>
    </location>
</feature>
<feature type="splice variant" id="VSP_022061" description="In isoform 2." evidence="7">
    <original>MSMR</original>
    <variation>MNLEQERPFVCSAPGCSQRFPTEDHLMIHRHKHEMTLKFPSIKTDNMLSDQTPTPTRFLKNCEEVGLFSELDCSFEHEFRKAQEEENSKRNISMHNTVGGTMTGPGAHQLGSTRMPNHDSSVVIQQAMPSPQSSSVITQAPSTNRQIG</variation>
    <location>
        <begin position="1"/>
        <end position="4"/>
    </location>
</feature>
<feature type="splice variant" id="VSP_022062" description="In isoform 2." evidence="7">
    <original>RLKAALTHHPAAMS</original>
    <variation>NLHRPSPLALCLHS</variation>
    <location>
        <begin position="84"/>
        <end position="97"/>
    </location>
</feature>
<feature type="splice variant" id="VSP_022063" description="In isoform 2." evidence="7">
    <location>
        <begin position="98"/>
        <end position="357"/>
    </location>
</feature>
<feature type="sequence conflict" description="In Ref. 2; BAC34998." evidence="8" ref="2">
    <original>H</original>
    <variation>P</variation>
    <location>
        <position position="185"/>
    </location>
</feature>
<sequence length="357" mass="39955">MSMRPVPGSLSSLLHLHNRQRQPMPASMPGTLPNPTMPGSSAVLMPMERQMSVNSSIMGMQGPNLSNPCASPQVQPMHSEAKMRLKAALTHHPAAMSNGNMSTIGHMMEMMGSRQDQTPHHHLHSHPHQHQTLPPHHPYPHQHQHPAHHPHPQPHHQQNHPHHHSHSHLHAHPAHHQTSPHPPLHTGNQAQVSPATQQMQPTQTIQPPQPTGGRRRRVVDEDPDERRRKFLERNRAAATRCRQKRKVWVMSLEKKAEELTQTNMQLQNEVSMLKNEVAQLKQLLLTHKDCPITAMQKESQGYLSPESSPPASPVPACSQQQVIQHNTITTSSSVSEVVGSSTLSQLTTHRTDLNPIL</sequence>
<reference key="1">
    <citation type="journal article" date="2005" name="Science">
        <title>The transcriptional landscape of the mammalian genome.</title>
        <authorList>
            <person name="Carninci P."/>
            <person name="Kasukawa T."/>
            <person name="Katayama S."/>
            <person name="Gough J."/>
            <person name="Frith M.C."/>
            <person name="Maeda N."/>
            <person name="Oyama R."/>
            <person name="Ravasi T."/>
            <person name="Lenhard B."/>
            <person name="Wells C."/>
            <person name="Kodzius R."/>
            <person name="Shimokawa K."/>
            <person name="Bajic V.B."/>
            <person name="Brenner S.E."/>
            <person name="Batalov S."/>
            <person name="Forrest A.R."/>
            <person name="Zavolan M."/>
            <person name="Davis M.J."/>
            <person name="Wilming L.G."/>
            <person name="Aidinis V."/>
            <person name="Allen J.E."/>
            <person name="Ambesi-Impiombato A."/>
            <person name="Apweiler R."/>
            <person name="Aturaliya R.N."/>
            <person name="Bailey T.L."/>
            <person name="Bansal M."/>
            <person name="Baxter L."/>
            <person name="Beisel K.W."/>
            <person name="Bersano T."/>
            <person name="Bono H."/>
            <person name="Chalk A.M."/>
            <person name="Chiu K.P."/>
            <person name="Choudhary V."/>
            <person name="Christoffels A."/>
            <person name="Clutterbuck D.R."/>
            <person name="Crowe M.L."/>
            <person name="Dalla E."/>
            <person name="Dalrymple B.P."/>
            <person name="de Bono B."/>
            <person name="Della Gatta G."/>
            <person name="di Bernardo D."/>
            <person name="Down T."/>
            <person name="Engstrom P."/>
            <person name="Fagiolini M."/>
            <person name="Faulkner G."/>
            <person name="Fletcher C.F."/>
            <person name="Fukushima T."/>
            <person name="Furuno M."/>
            <person name="Futaki S."/>
            <person name="Gariboldi M."/>
            <person name="Georgii-Hemming P."/>
            <person name="Gingeras T.R."/>
            <person name="Gojobori T."/>
            <person name="Green R.E."/>
            <person name="Gustincich S."/>
            <person name="Harbers M."/>
            <person name="Hayashi Y."/>
            <person name="Hensch T.K."/>
            <person name="Hirokawa N."/>
            <person name="Hill D."/>
            <person name="Huminiecki L."/>
            <person name="Iacono M."/>
            <person name="Ikeo K."/>
            <person name="Iwama A."/>
            <person name="Ishikawa T."/>
            <person name="Jakt M."/>
            <person name="Kanapin A."/>
            <person name="Katoh M."/>
            <person name="Kawasawa Y."/>
            <person name="Kelso J."/>
            <person name="Kitamura H."/>
            <person name="Kitano H."/>
            <person name="Kollias G."/>
            <person name="Krishnan S.P."/>
            <person name="Kruger A."/>
            <person name="Kummerfeld S.K."/>
            <person name="Kurochkin I.V."/>
            <person name="Lareau L.F."/>
            <person name="Lazarevic D."/>
            <person name="Lipovich L."/>
            <person name="Liu J."/>
            <person name="Liuni S."/>
            <person name="McWilliam S."/>
            <person name="Madan Babu M."/>
            <person name="Madera M."/>
            <person name="Marchionni L."/>
            <person name="Matsuda H."/>
            <person name="Matsuzawa S."/>
            <person name="Miki H."/>
            <person name="Mignone F."/>
            <person name="Miyake S."/>
            <person name="Morris K."/>
            <person name="Mottagui-Tabar S."/>
            <person name="Mulder N."/>
            <person name="Nakano N."/>
            <person name="Nakauchi H."/>
            <person name="Ng P."/>
            <person name="Nilsson R."/>
            <person name="Nishiguchi S."/>
            <person name="Nishikawa S."/>
            <person name="Nori F."/>
            <person name="Ohara O."/>
            <person name="Okazaki Y."/>
            <person name="Orlando V."/>
            <person name="Pang K.C."/>
            <person name="Pavan W.J."/>
            <person name="Pavesi G."/>
            <person name="Pesole G."/>
            <person name="Petrovsky N."/>
            <person name="Piazza S."/>
            <person name="Reed J."/>
            <person name="Reid J.F."/>
            <person name="Ring B.Z."/>
            <person name="Ringwald M."/>
            <person name="Rost B."/>
            <person name="Ruan Y."/>
            <person name="Salzberg S.L."/>
            <person name="Sandelin A."/>
            <person name="Schneider C."/>
            <person name="Schoenbach C."/>
            <person name="Sekiguchi K."/>
            <person name="Semple C.A."/>
            <person name="Seno S."/>
            <person name="Sessa L."/>
            <person name="Sheng Y."/>
            <person name="Shibata Y."/>
            <person name="Shimada H."/>
            <person name="Shimada K."/>
            <person name="Silva D."/>
            <person name="Sinclair B."/>
            <person name="Sperling S."/>
            <person name="Stupka E."/>
            <person name="Sugiura K."/>
            <person name="Sultana R."/>
            <person name="Takenaka Y."/>
            <person name="Taki K."/>
            <person name="Tammoja K."/>
            <person name="Tan S.L."/>
            <person name="Tang S."/>
            <person name="Taylor M.S."/>
            <person name="Tegner J."/>
            <person name="Teichmann S.A."/>
            <person name="Ueda H.R."/>
            <person name="van Nimwegen E."/>
            <person name="Verardo R."/>
            <person name="Wei C.L."/>
            <person name="Yagi K."/>
            <person name="Yamanishi H."/>
            <person name="Zabarovsky E."/>
            <person name="Zhu S."/>
            <person name="Zimmer A."/>
            <person name="Hide W."/>
            <person name="Bult C."/>
            <person name="Grimmond S.M."/>
            <person name="Teasdale R.D."/>
            <person name="Liu E.T."/>
            <person name="Brusic V."/>
            <person name="Quackenbush J."/>
            <person name="Wahlestedt C."/>
            <person name="Mattick J.S."/>
            <person name="Hume D.A."/>
            <person name="Kai C."/>
            <person name="Sasaki D."/>
            <person name="Tomaru Y."/>
            <person name="Fukuda S."/>
            <person name="Kanamori-Katayama M."/>
            <person name="Suzuki M."/>
            <person name="Aoki J."/>
            <person name="Arakawa T."/>
            <person name="Iida J."/>
            <person name="Imamura K."/>
            <person name="Itoh M."/>
            <person name="Kato T."/>
            <person name="Kawaji H."/>
            <person name="Kawagashira N."/>
            <person name="Kawashima T."/>
            <person name="Kojima M."/>
            <person name="Kondo S."/>
            <person name="Konno H."/>
            <person name="Nakano K."/>
            <person name="Ninomiya N."/>
            <person name="Nishio T."/>
            <person name="Okada M."/>
            <person name="Plessy C."/>
            <person name="Shibata K."/>
            <person name="Shiraki T."/>
            <person name="Suzuki S."/>
            <person name="Tagami M."/>
            <person name="Waki K."/>
            <person name="Watahiki A."/>
            <person name="Okamura-Oho Y."/>
            <person name="Suzuki H."/>
            <person name="Kawai J."/>
            <person name="Hayashizaki Y."/>
        </authorList>
    </citation>
    <scope>NUCLEOTIDE SEQUENCE [LARGE SCALE MRNA] (ISOFORMS 1 AND 2)</scope>
    <source>
        <strain>NOD</strain>
    </source>
</reference>
<reference evidence="8" key="2">
    <citation type="journal article" date="2004" name="Genome Res.">
        <title>The status, quality, and expansion of the NIH full-length cDNA project: the Mammalian Gene Collection (MGC).</title>
        <authorList>
            <consortium name="The MGC Project Team"/>
        </authorList>
    </citation>
    <scope>NUCLEOTIDE SEQUENCE [LARGE SCALE MRNA] OF 5-357 (ISOFORM 1)</scope>
    <source>
        <tissue evidence="6">Mammary gland</tissue>
    </source>
</reference>
<comment type="function">
    <text evidence="2">Binds to the cAMP response element and activates transcription.</text>
</comment>
<comment type="subunit">
    <text evidence="1">Binds DNA as a homodimer or as a heterodimer with JUN or ATF2/CREBP1.</text>
</comment>
<comment type="subcellular location">
    <subcellularLocation>
        <location evidence="8">Nucleus</location>
    </subcellularLocation>
</comment>
<comment type="alternative products">
    <event type="alternative splicing"/>
    <isoform>
        <id>Q8K1L0-1</id>
        <name>1</name>
        <sequence type="displayed"/>
    </isoform>
    <isoform>
        <id>Q8K1L0-2</id>
        <name>2</name>
        <sequence type="described" ref="VSP_022061 VSP_022062 VSP_022063"/>
    </isoform>
</comment>
<comment type="similarity">
    <text evidence="4 8">Belongs to the bZIP family.</text>
</comment>
<comment type="sequence caution" evidence="8">
    <conflict type="erroneous initiation">
        <sequence resource="EMBL-CDS" id="AAH29022"/>
    </conflict>
</comment>
<organism evidence="9">
    <name type="scientific">Mus musculus</name>
    <name type="common">Mouse</name>
    <dbReference type="NCBI Taxonomy" id="10090"/>
    <lineage>
        <taxon>Eukaryota</taxon>
        <taxon>Metazoa</taxon>
        <taxon>Chordata</taxon>
        <taxon>Craniata</taxon>
        <taxon>Vertebrata</taxon>
        <taxon>Euteleostomi</taxon>
        <taxon>Mammalia</taxon>
        <taxon>Eutheria</taxon>
        <taxon>Euarchontoglires</taxon>
        <taxon>Glires</taxon>
        <taxon>Rodentia</taxon>
        <taxon>Myomorpha</taxon>
        <taxon>Muroidea</taxon>
        <taxon>Muridae</taxon>
        <taxon>Murinae</taxon>
        <taxon>Mus</taxon>
        <taxon>Mus</taxon>
    </lineage>
</organism>
<protein>
    <recommendedName>
        <fullName>Cyclic AMP-responsive element-binding protein 5</fullName>
        <shortName>CREB-5</shortName>
        <shortName>cAMP-responsive element-binding protein 5</shortName>
    </recommendedName>
    <alternativeName>
        <fullName>CRE-BPa</fullName>
    </alternativeName>
</protein>